<accession>O55611</accession>
<accession>Q75T12</accession>
<accession>Q85412</accession>
<evidence type="ECO:0000250" key="1"/>
<evidence type="ECO:0000305" key="2"/>
<dbReference type="EMBL" id="D16331">
    <property type="protein sequence ID" value="BAA03838.1"/>
    <property type="molecule type" value="Genomic_RNA"/>
</dbReference>
<dbReference type="EMBL" id="AB010494">
    <property type="protein sequence ID" value="BAA24618.1"/>
    <property type="molecule type" value="mRNA"/>
</dbReference>
<dbReference type="EMBL" id="AB009663">
    <property type="protein sequence ID" value="BAA24083.1"/>
    <property type="molecule type" value="Genomic_RNA"/>
</dbReference>
<dbReference type="EMBL" id="AB044824">
    <property type="protein sequence ID" value="BAA96802.1"/>
    <property type="molecule type" value="Genomic_RNA"/>
</dbReference>
<dbReference type="EMBL" id="AB128149">
    <property type="protein sequence ID" value="BAD04910.1"/>
    <property type="molecule type" value="Genomic_RNA"/>
</dbReference>
<dbReference type="PIR" id="A58460">
    <property type="entry name" value="A58460"/>
</dbReference>
<dbReference type="SMR" id="O55611"/>
<dbReference type="Proteomes" id="UP000006366">
    <property type="component" value="Genome"/>
</dbReference>
<dbReference type="Proteomes" id="UP000007309">
    <property type="component" value="Genome"/>
</dbReference>
<dbReference type="Proteomes" id="UP000007310">
    <property type="component" value="Genome"/>
</dbReference>
<dbReference type="GO" id="GO:0019029">
    <property type="term" value="C:helical viral capsid"/>
    <property type="evidence" value="ECO:0007669"/>
    <property type="project" value="UniProtKB-KW"/>
</dbReference>
<dbReference type="GO" id="GO:0030430">
    <property type="term" value="C:host cell cytoplasm"/>
    <property type="evidence" value="ECO:0007669"/>
    <property type="project" value="UniProtKB-SubCell"/>
</dbReference>
<dbReference type="GO" id="GO:1990904">
    <property type="term" value="C:ribonucleoprotein complex"/>
    <property type="evidence" value="ECO:0007669"/>
    <property type="project" value="UniProtKB-KW"/>
</dbReference>
<dbReference type="GO" id="GO:0019013">
    <property type="term" value="C:viral nucleocapsid"/>
    <property type="evidence" value="ECO:0007669"/>
    <property type="project" value="UniProtKB-KW"/>
</dbReference>
<dbReference type="GO" id="GO:0003723">
    <property type="term" value="F:RNA binding"/>
    <property type="evidence" value="ECO:0007669"/>
    <property type="project" value="UniProtKB-KW"/>
</dbReference>
<dbReference type="Gene3D" id="1.10.3610.10">
    <property type="entry name" value="Nucleoprotein"/>
    <property type="match status" value="1"/>
</dbReference>
<dbReference type="Gene3D" id="1.10.3570.10">
    <property type="entry name" value="Rhabdovirus nucleocapsid protein like domain"/>
    <property type="match status" value="1"/>
</dbReference>
<dbReference type="InterPro" id="IPR000448">
    <property type="entry name" value="Rhabdo_ncapsid"/>
</dbReference>
<dbReference type="InterPro" id="IPR023331">
    <property type="entry name" value="Rhabdovirus_ncapsid_C"/>
</dbReference>
<dbReference type="InterPro" id="IPR023330">
    <property type="entry name" value="Rhabdovirus_ncapsid_N"/>
</dbReference>
<dbReference type="InterPro" id="IPR035961">
    <property type="entry name" value="Rhabdovirus_nucleoprotein-like"/>
</dbReference>
<dbReference type="Pfam" id="PF00945">
    <property type="entry name" value="Rhabdo_ncap"/>
    <property type="match status" value="1"/>
</dbReference>
<dbReference type="SUPFAM" id="SSF140809">
    <property type="entry name" value="Rhabdovirus nucleoprotein-like"/>
    <property type="match status" value="1"/>
</dbReference>
<reference key="1">
    <citation type="journal article" date="1994" name="Virus Genes">
        <title>Nucleotide sequence of the nucleoprotein gene of the RC.HL strain of rabies virus, a seed strain used for animal vaccine production in Japan.</title>
        <authorList>
            <person name="Goto H."/>
            <person name="Minamoto N."/>
            <person name="Ito H."/>
            <person name="Sugiyama M."/>
            <person name="Kinjo T."/>
            <person name="Mannen K."/>
            <person name="Mifune K."/>
            <person name="Kawai A."/>
        </authorList>
    </citation>
    <scope>NUCLEOTIDE SEQUENCE [GENOMIC RNA]</scope>
    <source>
        <strain>RC-HL</strain>
    </source>
</reference>
<reference key="2">
    <citation type="submission" date="1998-01" db="EMBL/GenBank/DDBJ databases">
        <title>Rabies virus mRNA for nucleoprotein, strain:Nishigahara.</title>
        <authorList>
            <person name="Minamoto N."/>
        </authorList>
    </citation>
    <scope>NUCLEOTIDE SEQUENCE [MRNA]</scope>
</reference>
<reference key="3">
    <citation type="journal article" date="2001" name="Microbiol. Immunol.">
        <title>A comparison of complete genome sequences of the attenuated RC-HL strain of rabies virus used for production of animal vaccine in Japan, and the parental Nishigahara strain.</title>
        <authorList>
            <person name="Ito N."/>
            <person name="Kakemizu M."/>
            <person name="Ito K.A."/>
            <person name="Yamamoto A."/>
            <person name="Yoshida Y."/>
            <person name="Sugiyama M."/>
            <person name="Minamoto N."/>
        </authorList>
    </citation>
    <scope>NUCLEOTIDE SEQUENCE [GENOMIC RNA]</scope>
    <source>
        <strain>Nishigahara</strain>
        <strain>RC-HL</strain>
    </source>
</reference>
<reference key="4">
    <citation type="journal article" date="2007" name="Virus Res.">
        <title>Involvement of nucleoprotein, phosphoprotein, and matrix protein genes of rabies virus in virulence for adult mice.</title>
        <authorList>
            <person name="Shimizu K."/>
            <person name="Ito N."/>
            <person name="Mita T."/>
            <person name="Yamada K."/>
            <person name="Hosokawa-Muto J."/>
            <person name="Sugiyama M."/>
            <person name="Minamoto N."/>
        </authorList>
    </citation>
    <scope>NUCLEOTIDE SEQUENCE [GENOMIC RNA]</scope>
    <source>
        <strain>Ni-CE</strain>
    </source>
</reference>
<feature type="chain" id="PRO_0000295212" description="Nucleoprotein">
    <location>
        <begin position="1"/>
        <end position="450"/>
    </location>
</feature>
<feature type="modified residue" description="Phosphoserine; by host CK2" evidence="1">
    <location>
        <position position="389"/>
    </location>
</feature>
<feature type="sequence variant" description="In strain: RC-HL.">
    <original>S</original>
    <variation>A</variation>
    <location>
        <position position="10"/>
    </location>
</feature>
<feature type="sequence variant" description="In strain: RC-HL.">
    <original>M</original>
    <variation>L</variation>
    <location>
        <position position="128"/>
    </location>
</feature>
<feature type="sequence variant" description="In strain: RC-HL.">
    <original>I</original>
    <variation>T</variation>
    <location>
        <position position="257"/>
    </location>
</feature>
<feature type="sequence variant" description="In strain: Ni-CE.">
    <original>F</original>
    <variation>L</variation>
    <location>
        <position position="273"/>
    </location>
</feature>
<feature type="sequence variant" description="In strain: RC-HL.">
    <original>YFS</original>
    <variation>HFP</variation>
    <location>
        <begin position="394"/>
        <end position="396"/>
    </location>
</feature>
<feature type="sequence variant" description="In strain: Ni-CE.">
    <original>YF</original>
    <variation>HL</variation>
    <location>
        <begin position="394"/>
        <end position="395"/>
    </location>
</feature>
<organism>
    <name type="scientific">Rabies virus (strain Nishigahara RCEH)</name>
    <name type="common">RABV</name>
    <dbReference type="NCBI Taxonomy" id="11298"/>
    <lineage>
        <taxon>Viruses</taxon>
        <taxon>Riboviria</taxon>
        <taxon>Orthornavirae</taxon>
        <taxon>Negarnaviricota</taxon>
        <taxon>Haploviricotina</taxon>
        <taxon>Monjiviricetes</taxon>
        <taxon>Mononegavirales</taxon>
        <taxon>Rhabdoviridae</taxon>
        <taxon>Alpharhabdovirinae</taxon>
        <taxon>Lyssavirus</taxon>
        <taxon>Lyssavirus rabies</taxon>
    </lineage>
</organism>
<gene>
    <name type="primary">N</name>
</gene>
<keyword id="KW-0167">Capsid protein</keyword>
<keyword id="KW-1139">Helical capsid protein</keyword>
<keyword id="KW-1035">Host cytoplasm</keyword>
<keyword id="KW-0597">Phosphoprotein</keyword>
<keyword id="KW-0687">Ribonucleoprotein</keyword>
<keyword id="KW-0694">RNA-binding</keyword>
<keyword id="KW-0766">Superantigen</keyword>
<keyword id="KW-0543">Viral nucleoprotein</keyword>
<keyword id="KW-0946">Virion</keyword>
<comment type="function">
    <text evidence="1">Encapsidates the genome in a ratio of one protein N per nine ribonucleotides, protecting it from nucleases. If expressed without protein P it binds non-specifically RNA and therefore can bind it's own mRNA. Interaction with protein P abolishes any non-specific RNA binding, and prevents phosphorylation. The soluble N-P complex encapsidates specifically the genomic RNA, with protein N protecting the genome like a pearl necklace. The encapsidated genomic RNA is termed the nucleocapsid (NC) and serves as template for viral transcription and replication. Protein N binds protein P in the NC through a different interaction, and can be phosphorylated. Subsequent viral replication is dependent on intracellular concentration of newly synthesized protein N. During replication, encapsidation by protein N is coupled to RNA synthesis and all replicative products are resistant to nucleases (By similarity).</text>
</comment>
<comment type="subunit">
    <text evidence="1">Homomultimerizes to form the nucleocapsid. Binds to viral genomic RNA. In nucleocapsid, binds protein P and thereby positions the polymerase on the template. Protein P acts as a chaperone on free protein N to prevent it from aggregation before encapsidating genomic RNA (By similarity).</text>
</comment>
<comment type="subcellular location">
    <subcellularLocation>
        <location>Virion</location>
    </subcellularLocation>
    <subcellularLocation>
        <location evidence="1">Host cytoplasm</location>
    </subcellularLocation>
</comment>
<comment type="PTM">
    <text evidence="1">Phosphorylated by host CK2. Unphosphorylated protein N seems to have a better affinity for leader viral promoter encapsidation. Phosphorylation of protein N in ribonucleocapsid may stabilize the interaction with protein P, thereby playing an important role in viral transcription/replication (By similarity).</text>
</comment>
<comment type="miscellaneous">
    <text evidence="1">Displays a superantigen activity in human and mouse, activating mostly V-beta-8 subtypes of T-cell receptor.</text>
</comment>
<comment type="similarity">
    <text evidence="2">Belongs to the lyssavirus nucleocapsid protein family.</text>
</comment>
<organismHost>
    <name type="scientific">Homo sapiens</name>
    <name type="common">Human</name>
    <dbReference type="NCBI Taxonomy" id="9606"/>
</organismHost>
<organismHost>
    <name type="scientific">Mammalia</name>
    <dbReference type="NCBI Taxonomy" id="40674"/>
</organismHost>
<proteinExistence type="evidence at transcript level"/>
<protein>
    <recommendedName>
        <fullName>Nucleoprotein</fullName>
        <shortName>NP</shortName>
    </recommendedName>
    <alternativeName>
        <fullName>Nucleocapsid protein</fullName>
        <shortName>Protein N</shortName>
    </alternativeName>
</protein>
<sequence>MDADRIVFRSNNQVVSLRPEIIADQYEYKYPAIKDLKKPCITLGKAPDLNKAYKSVLSGMNAAKLDPDDVCSYLAAAMQFFEGTCPEDWTSYGILIARKGDKITPNSLVEIKRNDVEGNWALTGGMEMTRDPTVSEHASLVGLLLSLYRLSKISGQNTGNYKTNIADRIEQIFETAPFVKIVEHHTLMTTHKMCANWSTIPNFRFLAGTYDMFFSRIEHLYSAIRVGTVVTAYEDCSGLVSFTGFIKQINLTAREAILYFFHKNFEEEIRRMFEPGQETAVPHSYFIHFRSLGLSGKSPYSSNAVGHVFNLIHFVGCYMGQIRSLNATVIAACAPHEMSVLGGYLGEEFFGRGTFERRFFRDEKELQEYEAAELTKTDVALADDGTVDSDDEDYFSGEARGPEAVYARIMMNGGRLKRSHIRRYVSVSSNHQARPNSFAEFLNKTYSSDS</sequence>
<name>NCAP_RABVN</name>